<name>UBP29_MOUSE</name>
<organism>
    <name type="scientific">Mus musculus</name>
    <name type="common">Mouse</name>
    <dbReference type="NCBI Taxonomy" id="10090"/>
    <lineage>
        <taxon>Eukaryota</taxon>
        <taxon>Metazoa</taxon>
        <taxon>Chordata</taxon>
        <taxon>Craniata</taxon>
        <taxon>Vertebrata</taxon>
        <taxon>Euteleostomi</taxon>
        <taxon>Mammalia</taxon>
        <taxon>Eutheria</taxon>
        <taxon>Euarchontoglires</taxon>
        <taxon>Glires</taxon>
        <taxon>Rodentia</taxon>
        <taxon>Myomorpha</taxon>
        <taxon>Muroidea</taxon>
        <taxon>Muridae</taxon>
        <taxon>Murinae</taxon>
        <taxon>Mus</taxon>
        <taxon>Mus</taxon>
    </lineage>
</organism>
<protein>
    <recommendedName>
        <fullName evidence="8">Ubiquitin carboxyl-terminal hydrolase 29</fullName>
        <ecNumber evidence="6">3.4.19.12</ecNumber>
    </recommendedName>
    <alternativeName>
        <fullName>Deubiquitinating enzyme 29</fullName>
    </alternativeName>
    <alternativeName>
        <fullName>Ubiquitin thioesterase 29</fullName>
    </alternativeName>
    <alternativeName>
        <fullName>Ubiquitin-specific-processing protease 29</fullName>
    </alternativeName>
</protein>
<reference key="1">
    <citation type="journal article" date="2000" name="Genome Res.">
        <title>Discovery of a novel, paternally expressed ubiquitin-specific processing protease gene through comparative analysis of an imprinted region of mouse chromosome 7 and human chromosome 19q13.4.</title>
        <authorList>
            <person name="Kim J."/>
            <person name="Noskov V.N."/>
            <person name="Lu X."/>
            <person name="Bergmann A."/>
            <person name="Ren X."/>
            <person name="Warth T."/>
            <person name="Richardson P."/>
            <person name="Kouprina N."/>
            <person name="Stubbs L."/>
        </authorList>
    </citation>
    <scope>NUCLEOTIDE SEQUENCE [MRNA]</scope>
    <scope>TISSUE SPECIFICITY</scope>
    <source>
        <strain>129/SvJ</strain>
    </source>
</reference>
<reference key="2">
    <citation type="submission" date="2007-10" db="EMBL/GenBank/DDBJ databases">
        <title>An active antisense promoter in mouse L1 retrotransposons has implications for fusion gene expression and epigenetic control.</title>
        <authorList>
            <person name="Li J."/>
            <person name="Symer D.E."/>
        </authorList>
    </citation>
    <scope>NUCLEOTIDE SEQUENCE [MRNA]</scope>
    <source>
        <tissue>Testis</tissue>
    </source>
</reference>
<reference key="3">
    <citation type="journal article" date="2019" name="Sci. China Life Sci.">
        <title>The deubiquitinating gene Usp29 is dispensable for fertility in male mice.</title>
        <authorList>
            <person name="Huang Z."/>
            <person name="Khan M."/>
            <person name="Xu J."/>
            <person name="Khan T."/>
            <person name="Ma H."/>
            <person name="Khan R."/>
            <person name="Hussain H.M.J."/>
            <person name="Jiang X."/>
            <person name="Shi Q."/>
        </authorList>
    </citation>
    <scope>TISSUE SPECIFICITY</scope>
    <scope>DISRUPTION PHENOTYPE</scope>
</reference>
<reference key="4">
    <citation type="journal article" date="2020" name="Cell Res.">
        <title>USP29 maintains the stability of cGAS and promotes cellular antiviral responses and autoimmunity.</title>
        <authorList>
            <person name="Zhang Q."/>
            <person name="Tang Z."/>
            <person name="An R."/>
            <person name="Ye L."/>
            <person name="Zhong B."/>
        </authorList>
    </citation>
    <scope>FUNCTION</scope>
    <scope>CATALYTIC ACTIVITY</scope>
    <scope>ACTIVE SITE</scope>
    <scope>MUTAGENESIS OF CYS-298</scope>
</reference>
<feature type="chain" id="PRO_0000080661" description="Ubiquitin carboxyl-terminal hydrolase 29">
    <location>
        <begin position="1"/>
        <end position="869"/>
    </location>
</feature>
<feature type="domain" description="USP">
    <location>
        <begin position="289"/>
        <end position="826"/>
    </location>
</feature>
<feature type="region of interest" description="Disordered" evidence="3">
    <location>
        <begin position="104"/>
        <end position="226"/>
    </location>
</feature>
<feature type="region of interest" description="Disordered" evidence="3">
    <location>
        <begin position="723"/>
        <end position="754"/>
    </location>
</feature>
<feature type="compositionally biased region" description="Polar residues" evidence="3">
    <location>
        <begin position="104"/>
        <end position="120"/>
    </location>
</feature>
<feature type="compositionally biased region" description="Polar residues" evidence="3">
    <location>
        <begin position="140"/>
        <end position="150"/>
    </location>
</feature>
<feature type="compositionally biased region" description="Basic and acidic residues" evidence="3">
    <location>
        <begin position="187"/>
        <end position="200"/>
    </location>
</feature>
<feature type="compositionally biased region" description="Basic residues" evidence="3">
    <location>
        <begin position="201"/>
        <end position="212"/>
    </location>
</feature>
<feature type="compositionally biased region" description="Basic and acidic residues" evidence="3">
    <location>
        <begin position="213"/>
        <end position="226"/>
    </location>
</feature>
<feature type="active site" description="Nucleophile" evidence="1 2 9">
    <location>
        <position position="298"/>
    </location>
</feature>
<feature type="active site" description="Proton acceptor" evidence="1 2">
    <location>
        <position position="781"/>
    </location>
</feature>
<feature type="mutagenesis site" description="Impaired ability to mediate deubiquitination of CGAS." evidence="6">
    <original>C</original>
    <variation>A</variation>
    <location>
        <position position="298"/>
    </location>
</feature>
<feature type="sequence conflict" description="In Ref. 1; AAG14415." evidence="8" ref="1">
    <original>L</original>
    <variation>S</variation>
    <location>
        <position position="568"/>
    </location>
</feature>
<keyword id="KW-0963">Cytoplasm</keyword>
<keyword id="KW-0378">Hydrolase</keyword>
<keyword id="KW-0391">Immunity</keyword>
<keyword id="KW-0399">Innate immunity</keyword>
<keyword id="KW-0645">Protease</keyword>
<keyword id="KW-1185">Reference proteome</keyword>
<keyword id="KW-0788">Thiol protease</keyword>
<keyword id="KW-0833">Ubl conjugation pathway</keyword>
<evidence type="ECO:0000255" key="1">
    <source>
        <dbReference type="PROSITE-ProRule" id="PRU10092"/>
    </source>
</evidence>
<evidence type="ECO:0000255" key="2">
    <source>
        <dbReference type="PROSITE-ProRule" id="PRU10093"/>
    </source>
</evidence>
<evidence type="ECO:0000256" key="3">
    <source>
        <dbReference type="SAM" id="MobiDB-lite"/>
    </source>
</evidence>
<evidence type="ECO:0000269" key="4">
    <source>
    </source>
</evidence>
<evidence type="ECO:0000269" key="5">
    <source>
    </source>
</evidence>
<evidence type="ECO:0000269" key="6">
    <source>
    </source>
</evidence>
<evidence type="ECO:0000303" key="7">
    <source>
    </source>
</evidence>
<evidence type="ECO:0000305" key="8"/>
<evidence type="ECO:0000305" key="9">
    <source>
    </source>
</evidence>
<proteinExistence type="evidence at protein level"/>
<dbReference type="EC" id="3.4.19.12" evidence="6"/>
<dbReference type="EMBL" id="AF229257">
    <property type="protein sequence ID" value="AAG14415.1"/>
    <property type="molecule type" value="mRNA"/>
</dbReference>
<dbReference type="EMBL" id="EU233992">
    <property type="protein sequence ID" value="ACD47025.1"/>
    <property type="molecule type" value="mRNA"/>
</dbReference>
<dbReference type="CCDS" id="CCDS20784.1"/>
<dbReference type="RefSeq" id="NP_001277923.1">
    <property type="nucleotide sequence ID" value="NM_001290994.1"/>
</dbReference>
<dbReference type="RefSeq" id="NP_001347430.1">
    <property type="nucleotide sequence ID" value="NM_001360501.2"/>
</dbReference>
<dbReference type="RefSeq" id="NP_001347431.1">
    <property type="nucleotide sequence ID" value="NM_001360502.2"/>
</dbReference>
<dbReference type="RefSeq" id="NP_001407092.1">
    <property type="nucleotide sequence ID" value="NM_001420163.1"/>
</dbReference>
<dbReference type="RefSeq" id="NP_001407093.1">
    <property type="nucleotide sequence ID" value="NM_001420164.1"/>
</dbReference>
<dbReference type="RefSeq" id="NP_067298.2">
    <property type="nucleotide sequence ID" value="NM_021323.4"/>
</dbReference>
<dbReference type="FunCoup" id="Q9ES63">
    <property type="interactions" value="116"/>
</dbReference>
<dbReference type="STRING" id="10090.ENSMUSP00000143769"/>
<dbReference type="MEROPS" id="C19.043"/>
<dbReference type="iPTMnet" id="Q9ES63"/>
<dbReference type="PhosphoSitePlus" id="Q9ES63"/>
<dbReference type="PaxDb" id="10090-ENSMUSP00000062349"/>
<dbReference type="ProteomicsDB" id="298459"/>
<dbReference type="Antibodypedia" id="19631">
    <property type="antibodies" value="138 antibodies from 25 providers"/>
</dbReference>
<dbReference type="DNASU" id="57775"/>
<dbReference type="Ensembl" id="ENSMUST00000054055.7">
    <property type="protein sequence ID" value="ENSMUSP00000062349.7"/>
    <property type="gene ID" value="ENSMUSG00000051527.12"/>
</dbReference>
<dbReference type="Ensembl" id="ENSMUST00000198068.3">
    <property type="protein sequence ID" value="ENSMUSP00000143267.3"/>
    <property type="gene ID" value="ENSMUSG00000051527.12"/>
</dbReference>
<dbReference type="Ensembl" id="ENSMUST00000200535.6">
    <property type="protein sequence ID" value="ENSMUSP00000143769.3"/>
    <property type="gene ID" value="ENSMUSG00000051527.12"/>
</dbReference>
<dbReference type="GeneID" id="57775"/>
<dbReference type="KEGG" id="mmu:57775"/>
<dbReference type="UCSC" id="uc009fcb.2">
    <property type="organism name" value="mouse"/>
</dbReference>
<dbReference type="AGR" id="MGI:1888998"/>
<dbReference type="CTD" id="57663"/>
<dbReference type="MGI" id="MGI:1888998">
    <property type="gene designation" value="Usp29"/>
</dbReference>
<dbReference type="VEuPathDB" id="HostDB:ENSMUSG00000051527"/>
<dbReference type="eggNOG" id="KOG1868">
    <property type="taxonomic scope" value="Eukaryota"/>
</dbReference>
<dbReference type="GeneTree" id="ENSGT00940000161929"/>
<dbReference type="HOGENOM" id="CLU_012557_0_0_1"/>
<dbReference type="InParanoid" id="Q9ES63"/>
<dbReference type="OMA" id="YIPKYLS"/>
<dbReference type="OrthoDB" id="289038at2759"/>
<dbReference type="PhylomeDB" id="Q9ES63"/>
<dbReference type="TreeFam" id="TF323032"/>
<dbReference type="Reactome" id="R-MMU-5689880">
    <property type="pathway name" value="Ub-specific processing proteases"/>
</dbReference>
<dbReference type="BioGRID-ORCS" id="57775">
    <property type="hits" value="3 hits in 79 CRISPR screens"/>
</dbReference>
<dbReference type="ChiTaRS" id="Usp29">
    <property type="organism name" value="mouse"/>
</dbReference>
<dbReference type="PRO" id="PR:Q9ES63"/>
<dbReference type="Proteomes" id="UP000000589">
    <property type="component" value="Chromosome 7"/>
</dbReference>
<dbReference type="RNAct" id="Q9ES63">
    <property type="molecule type" value="protein"/>
</dbReference>
<dbReference type="Bgee" id="ENSMUSG00000051527">
    <property type="expression patterns" value="Expressed in ventromedial nucleus of hypothalamus and 118 other cell types or tissues"/>
</dbReference>
<dbReference type="ExpressionAtlas" id="Q9ES63">
    <property type="expression patterns" value="baseline and differential"/>
</dbReference>
<dbReference type="GO" id="GO:0048471">
    <property type="term" value="C:perinuclear region of cytoplasm"/>
    <property type="evidence" value="ECO:0007669"/>
    <property type="project" value="UniProtKB-SubCell"/>
</dbReference>
<dbReference type="GO" id="GO:0004843">
    <property type="term" value="F:cysteine-type deubiquitinase activity"/>
    <property type="evidence" value="ECO:0007669"/>
    <property type="project" value="UniProtKB-EC"/>
</dbReference>
<dbReference type="GO" id="GO:0004197">
    <property type="term" value="F:cysteine-type endopeptidase activity"/>
    <property type="evidence" value="ECO:0000314"/>
    <property type="project" value="UniProtKB"/>
</dbReference>
<dbReference type="GO" id="GO:0051607">
    <property type="term" value="P:defense response to virus"/>
    <property type="evidence" value="ECO:0000314"/>
    <property type="project" value="UniProtKB"/>
</dbReference>
<dbReference type="GO" id="GO:0045087">
    <property type="term" value="P:innate immune response"/>
    <property type="evidence" value="ECO:0007669"/>
    <property type="project" value="UniProtKB-KW"/>
</dbReference>
<dbReference type="GO" id="GO:0060340">
    <property type="term" value="P:positive regulation of type I interferon-mediated signaling pathway"/>
    <property type="evidence" value="ECO:0000314"/>
    <property type="project" value="UniProtKB"/>
</dbReference>
<dbReference type="GO" id="GO:0071108">
    <property type="term" value="P:protein K48-linked deubiquitination"/>
    <property type="evidence" value="ECO:0000314"/>
    <property type="project" value="UniProtKB"/>
</dbReference>
<dbReference type="GO" id="GO:0050821">
    <property type="term" value="P:protein stabilization"/>
    <property type="evidence" value="ECO:0000314"/>
    <property type="project" value="UniProtKB"/>
</dbReference>
<dbReference type="GO" id="GO:0006508">
    <property type="term" value="P:proteolysis"/>
    <property type="evidence" value="ECO:0007669"/>
    <property type="project" value="UniProtKB-KW"/>
</dbReference>
<dbReference type="CDD" id="cd02257">
    <property type="entry name" value="Peptidase_C19"/>
    <property type="match status" value="1"/>
</dbReference>
<dbReference type="CDD" id="cd13312">
    <property type="entry name" value="PH_USP37_like"/>
    <property type="match status" value="1"/>
</dbReference>
<dbReference type="FunFam" id="2.30.29.180:FF:000001">
    <property type="entry name" value="Ubiquitin carboxyl-terminal hydrolase 37"/>
    <property type="match status" value="1"/>
</dbReference>
<dbReference type="Gene3D" id="3.90.70.10">
    <property type="entry name" value="Cysteine proteinases"/>
    <property type="match status" value="1"/>
</dbReference>
<dbReference type="Gene3D" id="2.30.29.180">
    <property type="entry name" value="Ubiquitin carboxyl-terminal hydrolase 26/29/37, pleckstrin homology-like domain"/>
    <property type="match status" value="1"/>
</dbReference>
<dbReference type="InterPro" id="IPR038765">
    <property type="entry name" value="Papain-like_cys_pep_sf"/>
</dbReference>
<dbReference type="InterPro" id="IPR050164">
    <property type="entry name" value="Peptidase_C19"/>
</dbReference>
<dbReference type="InterPro" id="IPR001394">
    <property type="entry name" value="Peptidase_C19_UCH"/>
</dbReference>
<dbReference type="InterPro" id="IPR032069">
    <property type="entry name" value="USP37-like_PH"/>
</dbReference>
<dbReference type="InterPro" id="IPR038093">
    <property type="entry name" value="USP37-like_PH_sf"/>
</dbReference>
<dbReference type="InterPro" id="IPR018200">
    <property type="entry name" value="USP_CS"/>
</dbReference>
<dbReference type="InterPro" id="IPR028889">
    <property type="entry name" value="USP_dom"/>
</dbReference>
<dbReference type="PANTHER" id="PTHR24006">
    <property type="entry name" value="UBIQUITIN CARBOXYL-TERMINAL HYDROLASE"/>
    <property type="match status" value="1"/>
</dbReference>
<dbReference type="PANTHER" id="PTHR24006:SF711">
    <property type="entry name" value="UBIQUITIN CARBOXYL-TERMINAL HYDROLASE 29"/>
    <property type="match status" value="1"/>
</dbReference>
<dbReference type="Pfam" id="PF00443">
    <property type="entry name" value="UCH"/>
    <property type="match status" value="1"/>
</dbReference>
<dbReference type="Pfam" id="PF16674">
    <property type="entry name" value="UCH_N"/>
    <property type="match status" value="1"/>
</dbReference>
<dbReference type="SUPFAM" id="SSF54001">
    <property type="entry name" value="Cysteine proteinases"/>
    <property type="match status" value="1"/>
</dbReference>
<dbReference type="PROSITE" id="PS00972">
    <property type="entry name" value="USP_1"/>
    <property type="match status" value="1"/>
</dbReference>
<dbReference type="PROSITE" id="PS00973">
    <property type="entry name" value="USP_2"/>
    <property type="match status" value="1"/>
</dbReference>
<dbReference type="PROSITE" id="PS50235">
    <property type="entry name" value="USP_3"/>
    <property type="match status" value="1"/>
</dbReference>
<sequence length="869" mass="97823">MAHLKINGLVQIRSTNRSKHTRASQWKEAVIEIVERKQKVNLVVSFKLEERRRVFQLGDNVTGVVVSGELGLYHLDLTLRDDTSLLIDKLSSADVEHLKSFLDSSTPCESQQPMEPMSSQDDLESSDPFCGEHQEAACGSLNTTPESGTPLSRKMPLSMSNTTGGQKRGEKQGRKRKTEPSSSSAEVNKDIPKENTPDQKKKSRRYYSRNRGGKAEKAVTLREQEKRSNWKLEPAFNSKSYGRANLDGTILPIATCSDDRDVSIFGLEIITHNGVQSLPDPYLNQLKREGFPNLGNTCYMNSILQSVFGIPTFAKDLLTQGIPWEKVSYDDLIMPLSQLLVLKDIRDVEIKGELLTSVKKSISTVADTFSGNEQNDAHEFLSLCLDQLKLNMEKVNAMWDTERRNTCAGSAGTKRFVCPVGANFEFELHSSIICEGCGEATIKTEVSNYLSIDLHHGTKTHPLSIQKSFDLFFTPEKIEHNCEKCKNKNSVLKYTLRRLPRVLIVHLKRYQVTTDLLPVKSEQPVEISKYLNISSHCHENRKLPFPLANTSPDVSQGMMPGIFNQSMLSKKVISESCDPMVLQVGSSVDAEIQSFQIMYEDEDASEEQQQRGLESGSMLEPELVKTENRILRQKTSLATDSMMGDGYSFLPMLCEPLSIQDPGLAEMGLQEVPENPEFKNYEKINIYGKSDGRTNTELSKLYQNHGSRIKGLFLPASLASVSSQEDPEKDLSRSPELQEDDPHSFAFGSDDSKDGEMGDDLQNYRLVSVVSHFGSSPNSGHYVSDVYDFQKQAWLLYSDVQVFESSDPSIQENRLNSGYIFFYMHNEIFEELLKKASECKVLSTSKEEKRDIDYFSTLLNGLTYILEEF</sequence>
<comment type="function">
    <text evidence="6">Deubiquitinase involved in innate antiviral immunity by mediating 'Lys-48'-linked deubiquitination of CGAS, thereby promoting its stabilization.</text>
</comment>
<comment type="catalytic activity">
    <reaction evidence="6">
        <text>Thiol-dependent hydrolysis of ester, thioester, amide, peptide and isopeptide bonds formed by the C-terminal Gly of ubiquitin (a 76-residue protein attached to proteins as an intracellular targeting signal).</text>
        <dbReference type="EC" id="3.4.19.12"/>
    </reaction>
</comment>
<comment type="subcellular location">
    <subcellularLocation>
        <location evidence="6">Cytoplasm</location>
        <location evidence="6">Perinuclear region</location>
    </subcellularLocation>
    <text evidence="6">Localizes to perinuclear region in response to herpes simplex virus-1 (HSV-1) infection.</text>
</comment>
<comment type="tissue specificity">
    <text evidence="4 5">Predominantly expressed in brain and testis (PubMed:30919279). Highest expression levels in adult brain, especially in the cerebral cortex and hippocampus, and in the forebrain, face, and limb buds of midgestation mouse embryos (PubMed:10958632).</text>
</comment>
<comment type="disruption phenotype">
    <text evidence="5">No visible phenotype in normal conditions.</text>
</comment>
<comment type="similarity">
    <text evidence="8">Belongs to the peptidase C19 family.</text>
</comment>
<accession>Q9ES63</accession>
<accession>C6EQG1</accession>
<gene>
    <name evidence="7" type="primary">Usp29</name>
</gene>